<feature type="chain" id="PRO_1000017447" description="Large ribosomal subunit protein bL27">
    <location>
        <begin position="1"/>
        <end position="82"/>
    </location>
</feature>
<feature type="region of interest" description="Disordered" evidence="2">
    <location>
        <begin position="1"/>
        <end position="26"/>
    </location>
</feature>
<keyword id="KW-0687">Ribonucleoprotein</keyword>
<keyword id="KW-0689">Ribosomal protein</keyword>
<comment type="similarity">
    <text evidence="1">Belongs to the bacterial ribosomal protein bL27 family.</text>
</comment>
<proteinExistence type="inferred from homology"/>
<sequence>MAHKKGQGASRNGRDSESKRLGMKVGAGQRVTTGSILVRQRGTKWHPAKNVGRGRDDTLFALVNGIVVLRKTDRTYVSVLPE</sequence>
<protein>
    <recommendedName>
        <fullName evidence="1">Large ribosomal subunit protein bL27</fullName>
    </recommendedName>
    <alternativeName>
        <fullName evidence="3">50S ribosomal protein L27</fullName>
    </alternativeName>
</protein>
<gene>
    <name evidence="1" type="primary">rpmA</name>
    <name type="ordered locus">CF0809</name>
</gene>
<dbReference type="EMBL" id="AP006861">
    <property type="protein sequence ID" value="BAE81581.1"/>
    <property type="molecule type" value="Genomic_DNA"/>
</dbReference>
<dbReference type="RefSeq" id="WP_011458358.1">
    <property type="nucleotide sequence ID" value="NC_007899.1"/>
</dbReference>
<dbReference type="SMR" id="Q253F7"/>
<dbReference type="STRING" id="264202.CF0809"/>
<dbReference type="KEGG" id="cfe:CF0809"/>
<dbReference type="eggNOG" id="COG0211">
    <property type="taxonomic scope" value="Bacteria"/>
</dbReference>
<dbReference type="HOGENOM" id="CLU_095424_4_0_0"/>
<dbReference type="OrthoDB" id="9803474at2"/>
<dbReference type="Proteomes" id="UP000001260">
    <property type="component" value="Chromosome"/>
</dbReference>
<dbReference type="GO" id="GO:0022625">
    <property type="term" value="C:cytosolic large ribosomal subunit"/>
    <property type="evidence" value="ECO:0007669"/>
    <property type="project" value="TreeGrafter"/>
</dbReference>
<dbReference type="GO" id="GO:0003735">
    <property type="term" value="F:structural constituent of ribosome"/>
    <property type="evidence" value="ECO:0007669"/>
    <property type="project" value="InterPro"/>
</dbReference>
<dbReference type="GO" id="GO:0006412">
    <property type="term" value="P:translation"/>
    <property type="evidence" value="ECO:0007669"/>
    <property type="project" value="UniProtKB-UniRule"/>
</dbReference>
<dbReference type="FunFam" id="2.40.50.100:FF:000020">
    <property type="entry name" value="50S ribosomal protein L27"/>
    <property type="match status" value="1"/>
</dbReference>
<dbReference type="Gene3D" id="2.40.50.100">
    <property type="match status" value="1"/>
</dbReference>
<dbReference type="HAMAP" id="MF_00539">
    <property type="entry name" value="Ribosomal_bL27"/>
    <property type="match status" value="1"/>
</dbReference>
<dbReference type="InterPro" id="IPR001684">
    <property type="entry name" value="Ribosomal_bL27"/>
</dbReference>
<dbReference type="NCBIfam" id="TIGR00062">
    <property type="entry name" value="L27"/>
    <property type="match status" value="1"/>
</dbReference>
<dbReference type="PANTHER" id="PTHR15893:SF0">
    <property type="entry name" value="LARGE RIBOSOMAL SUBUNIT PROTEIN BL27M"/>
    <property type="match status" value="1"/>
</dbReference>
<dbReference type="PANTHER" id="PTHR15893">
    <property type="entry name" value="RIBOSOMAL PROTEIN L27"/>
    <property type="match status" value="1"/>
</dbReference>
<dbReference type="Pfam" id="PF01016">
    <property type="entry name" value="Ribosomal_L27"/>
    <property type="match status" value="1"/>
</dbReference>
<dbReference type="PRINTS" id="PR00063">
    <property type="entry name" value="RIBOSOMALL27"/>
</dbReference>
<dbReference type="SUPFAM" id="SSF110324">
    <property type="entry name" value="Ribosomal L27 protein-like"/>
    <property type="match status" value="1"/>
</dbReference>
<accession>Q253F7</accession>
<name>RL27_CHLFF</name>
<reference key="1">
    <citation type="journal article" date="2006" name="DNA Res.">
        <title>Genome sequence of the cat pathogen, Chlamydophila felis.</title>
        <authorList>
            <person name="Azuma Y."/>
            <person name="Hirakawa H."/>
            <person name="Yamashita A."/>
            <person name="Cai Y."/>
            <person name="Rahman M.A."/>
            <person name="Suzuki H."/>
            <person name="Mitaku S."/>
            <person name="Toh H."/>
            <person name="Goto S."/>
            <person name="Murakami T."/>
            <person name="Sugi K."/>
            <person name="Hayashi H."/>
            <person name="Fukushi H."/>
            <person name="Hattori M."/>
            <person name="Kuhara S."/>
            <person name="Shirai M."/>
        </authorList>
    </citation>
    <scope>NUCLEOTIDE SEQUENCE [LARGE SCALE GENOMIC DNA]</scope>
    <source>
        <strain>Fe/C-56</strain>
    </source>
</reference>
<organism>
    <name type="scientific">Chlamydia felis (strain Fe/C-56)</name>
    <name type="common">Chlamydophila felis</name>
    <dbReference type="NCBI Taxonomy" id="264202"/>
    <lineage>
        <taxon>Bacteria</taxon>
        <taxon>Pseudomonadati</taxon>
        <taxon>Chlamydiota</taxon>
        <taxon>Chlamydiia</taxon>
        <taxon>Chlamydiales</taxon>
        <taxon>Chlamydiaceae</taxon>
        <taxon>Chlamydia/Chlamydophila group</taxon>
        <taxon>Chlamydia</taxon>
    </lineage>
</organism>
<evidence type="ECO:0000255" key="1">
    <source>
        <dbReference type="HAMAP-Rule" id="MF_00539"/>
    </source>
</evidence>
<evidence type="ECO:0000256" key="2">
    <source>
        <dbReference type="SAM" id="MobiDB-lite"/>
    </source>
</evidence>
<evidence type="ECO:0000305" key="3"/>